<organism>
    <name type="scientific">Methanoculleus marisnigri (strain ATCC 35101 / DSM 1498 / JR1)</name>
    <dbReference type="NCBI Taxonomy" id="368407"/>
    <lineage>
        <taxon>Archaea</taxon>
        <taxon>Methanobacteriati</taxon>
        <taxon>Methanobacteriota</taxon>
        <taxon>Stenosarchaea group</taxon>
        <taxon>Methanomicrobia</taxon>
        <taxon>Methanomicrobiales</taxon>
        <taxon>Methanomicrobiaceae</taxon>
        <taxon>Methanoculleus</taxon>
    </lineage>
</organism>
<gene>
    <name evidence="1" type="primary">hisF</name>
    <name type="ordered locus">Memar_0645</name>
</gene>
<keyword id="KW-0028">Amino-acid biosynthesis</keyword>
<keyword id="KW-0963">Cytoplasm</keyword>
<keyword id="KW-0368">Histidine biosynthesis</keyword>
<keyword id="KW-0456">Lyase</keyword>
<evidence type="ECO:0000255" key="1">
    <source>
        <dbReference type="HAMAP-Rule" id="MF_01013"/>
    </source>
</evidence>
<proteinExistence type="inferred from homology"/>
<feature type="chain" id="PRO_0000319464" description="Imidazole glycerol phosphate synthase subunit HisF">
    <location>
        <begin position="1"/>
        <end position="268"/>
    </location>
</feature>
<feature type="active site" evidence="1">
    <location>
        <position position="12"/>
    </location>
</feature>
<feature type="active site" evidence="1">
    <location>
        <position position="131"/>
    </location>
</feature>
<dbReference type="EC" id="4.3.2.10" evidence="1"/>
<dbReference type="EMBL" id="CP000562">
    <property type="protein sequence ID" value="ABN56578.1"/>
    <property type="molecule type" value="Genomic_DNA"/>
</dbReference>
<dbReference type="RefSeq" id="WP_011843489.1">
    <property type="nucleotide sequence ID" value="NC_009051.1"/>
</dbReference>
<dbReference type="SMR" id="A3CT78"/>
<dbReference type="STRING" id="368407.Memar_0645"/>
<dbReference type="GeneID" id="4848309"/>
<dbReference type="GeneID" id="76731215"/>
<dbReference type="KEGG" id="mem:Memar_0645"/>
<dbReference type="eggNOG" id="arCOG00617">
    <property type="taxonomic scope" value="Archaea"/>
</dbReference>
<dbReference type="HOGENOM" id="CLU_048577_4_0_2"/>
<dbReference type="OrthoDB" id="6261at2157"/>
<dbReference type="UniPathway" id="UPA00031">
    <property type="reaction ID" value="UER00010"/>
</dbReference>
<dbReference type="Proteomes" id="UP000002146">
    <property type="component" value="Chromosome"/>
</dbReference>
<dbReference type="GO" id="GO:0005737">
    <property type="term" value="C:cytoplasm"/>
    <property type="evidence" value="ECO:0007669"/>
    <property type="project" value="UniProtKB-SubCell"/>
</dbReference>
<dbReference type="GO" id="GO:0000107">
    <property type="term" value="F:imidazoleglycerol-phosphate synthase activity"/>
    <property type="evidence" value="ECO:0007669"/>
    <property type="project" value="UniProtKB-UniRule"/>
</dbReference>
<dbReference type="GO" id="GO:0016829">
    <property type="term" value="F:lyase activity"/>
    <property type="evidence" value="ECO:0007669"/>
    <property type="project" value="UniProtKB-KW"/>
</dbReference>
<dbReference type="GO" id="GO:0000105">
    <property type="term" value="P:L-histidine biosynthetic process"/>
    <property type="evidence" value="ECO:0007669"/>
    <property type="project" value="UniProtKB-UniRule"/>
</dbReference>
<dbReference type="CDD" id="cd04731">
    <property type="entry name" value="HisF"/>
    <property type="match status" value="1"/>
</dbReference>
<dbReference type="FunFam" id="3.20.20.70:FF:000006">
    <property type="entry name" value="Imidazole glycerol phosphate synthase subunit HisF"/>
    <property type="match status" value="1"/>
</dbReference>
<dbReference type="Gene3D" id="3.20.20.70">
    <property type="entry name" value="Aldolase class I"/>
    <property type="match status" value="1"/>
</dbReference>
<dbReference type="HAMAP" id="MF_01013">
    <property type="entry name" value="HisF"/>
    <property type="match status" value="1"/>
</dbReference>
<dbReference type="InterPro" id="IPR013785">
    <property type="entry name" value="Aldolase_TIM"/>
</dbReference>
<dbReference type="InterPro" id="IPR006062">
    <property type="entry name" value="His_biosynth"/>
</dbReference>
<dbReference type="InterPro" id="IPR004651">
    <property type="entry name" value="HisF"/>
</dbReference>
<dbReference type="InterPro" id="IPR050064">
    <property type="entry name" value="IGPS_HisA/HisF"/>
</dbReference>
<dbReference type="InterPro" id="IPR011060">
    <property type="entry name" value="RibuloseP-bd_barrel"/>
</dbReference>
<dbReference type="NCBIfam" id="TIGR00735">
    <property type="entry name" value="hisF"/>
    <property type="match status" value="1"/>
</dbReference>
<dbReference type="PANTHER" id="PTHR21235:SF2">
    <property type="entry name" value="IMIDAZOLE GLYCEROL PHOSPHATE SYNTHASE HISHF"/>
    <property type="match status" value="1"/>
</dbReference>
<dbReference type="PANTHER" id="PTHR21235">
    <property type="entry name" value="IMIDAZOLE GLYCEROL PHOSPHATE SYNTHASE SUBUNIT HISF/H IGP SYNTHASE SUBUNIT HISF/H"/>
    <property type="match status" value="1"/>
</dbReference>
<dbReference type="Pfam" id="PF00977">
    <property type="entry name" value="His_biosynth"/>
    <property type="match status" value="1"/>
</dbReference>
<dbReference type="SUPFAM" id="SSF51366">
    <property type="entry name" value="Ribulose-phoshate binding barrel"/>
    <property type="match status" value="1"/>
</dbReference>
<reference key="1">
    <citation type="journal article" date="2009" name="Stand. Genomic Sci.">
        <title>Complete genome sequence of Methanoculleus marisnigri Romesser et al. 1981 type strain JR1.</title>
        <authorList>
            <person name="Anderson I.J."/>
            <person name="Sieprawska-Lupa M."/>
            <person name="Lapidus A."/>
            <person name="Nolan M."/>
            <person name="Copeland A."/>
            <person name="Glavina Del Rio T."/>
            <person name="Tice H."/>
            <person name="Dalin E."/>
            <person name="Barry K."/>
            <person name="Saunders E."/>
            <person name="Han C."/>
            <person name="Brettin T."/>
            <person name="Detter J.C."/>
            <person name="Bruce D."/>
            <person name="Mikhailova N."/>
            <person name="Pitluck S."/>
            <person name="Hauser L."/>
            <person name="Land M."/>
            <person name="Lucas S."/>
            <person name="Richardson P."/>
            <person name="Whitman W.B."/>
            <person name="Kyrpides N.C."/>
        </authorList>
    </citation>
    <scope>NUCLEOTIDE SEQUENCE [LARGE SCALE GENOMIC DNA]</scope>
    <source>
        <strain>ATCC 35101 / DSM 1498 / JR1</strain>
    </source>
</reference>
<protein>
    <recommendedName>
        <fullName evidence="1">Imidazole glycerol phosphate synthase subunit HisF</fullName>
        <ecNumber evidence="1">4.3.2.10</ecNumber>
    </recommendedName>
    <alternativeName>
        <fullName evidence="1">IGP synthase cyclase subunit</fullName>
    </alternativeName>
    <alternativeName>
        <fullName evidence="1">IGP synthase subunit HisF</fullName>
    </alternativeName>
    <alternativeName>
        <fullName evidence="1">ImGP synthase subunit HisF</fullName>
        <shortName evidence="1">IGPS subunit HisF</shortName>
    </alternativeName>
</protein>
<accession>A3CT78</accession>
<sequence length="268" mass="28696">MVLTKRIIPCLDLKDGRVVKGTHFVGLRDAGDPVELAQRYNEQGADEVVFLDITATREDRGTIIDVVQRAADQLFLPLTVGGGIRTIEDMKQILRAGADKVSINSSAVADPNLISQGAERFGTQCIVVAVDVRRNYETAPGKTPITLADGQECWYEVVTHGGSRGTGLDAVAWATEAEERGAGEILLTSMEADGTKEGFDIPITRAVSETVGIPVVASGGVGTLDHFYDGFTEGKADACLAASVFHYGEFTVRQVKEYLAGRGIPVRL</sequence>
<comment type="function">
    <text evidence="1">IGPS catalyzes the conversion of PRFAR and glutamine to IGP, AICAR and glutamate. The HisF subunit catalyzes the cyclization activity that produces IGP and AICAR from PRFAR using the ammonia provided by the HisH subunit.</text>
</comment>
<comment type="catalytic activity">
    <reaction evidence="1">
        <text>5-[(5-phospho-1-deoxy-D-ribulos-1-ylimino)methylamino]-1-(5-phospho-beta-D-ribosyl)imidazole-4-carboxamide + L-glutamine = D-erythro-1-(imidazol-4-yl)glycerol 3-phosphate + 5-amino-1-(5-phospho-beta-D-ribosyl)imidazole-4-carboxamide + L-glutamate + H(+)</text>
        <dbReference type="Rhea" id="RHEA:24793"/>
        <dbReference type="ChEBI" id="CHEBI:15378"/>
        <dbReference type="ChEBI" id="CHEBI:29985"/>
        <dbReference type="ChEBI" id="CHEBI:58278"/>
        <dbReference type="ChEBI" id="CHEBI:58359"/>
        <dbReference type="ChEBI" id="CHEBI:58475"/>
        <dbReference type="ChEBI" id="CHEBI:58525"/>
        <dbReference type="EC" id="4.3.2.10"/>
    </reaction>
</comment>
<comment type="pathway">
    <text evidence="1">Amino-acid biosynthesis; L-histidine biosynthesis; L-histidine from 5-phospho-alpha-D-ribose 1-diphosphate: step 5/9.</text>
</comment>
<comment type="subunit">
    <text evidence="1">Heterodimer of HisH and HisF.</text>
</comment>
<comment type="subcellular location">
    <subcellularLocation>
        <location evidence="1">Cytoplasm</location>
    </subcellularLocation>
</comment>
<comment type="similarity">
    <text evidence="1">Belongs to the HisA/HisF family.</text>
</comment>
<name>HIS6_METMJ</name>